<protein>
    <recommendedName>
        <fullName evidence="1">Aspartate--tRNA ligase</fullName>
        <ecNumber evidence="1">6.1.1.12</ecNumber>
    </recommendedName>
    <alternativeName>
        <fullName evidence="1">Aspartyl-tRNA synthetase</fullName>
        <shortName evidence="1">AspRS</shortName>
    </alternativeName>
</protein>
<dbReference type="EC" id="6.1.1.12" evidence="1"/>
<dbReference type="EMBL" id="BA000016">
    <property type="protein sequence ID" value="BAB81639.1"/>
    <property type="molecule type" value="Genomic_DNA"/>
</dbReference>
<dbReference type="RefSeq" id="WP_003451272.1">
    <property type="nucleotide sequence ID" value="NC_003366.1"/>
</dbReference>
<dbReference type="SMR" id="Q8XJ28"/>
<dbReference type="STRING" id="195102.gene:10491202"/>
<dbReference type="KEGG" id="cpe:CPE1933"/>
<dbReference type="HOGENOM" id="CLU_014330_3_2_9"/>
<dbReference type="Proteomes" id="UP000000818">
    <property type="component" value="Chromosome"/>
</dbReference>
<dbReference type="GO" id="GO:0005737">
    <property type="term" value="C:cytoplasm"/>
    <property type="evidence" value="ECO:0007669"/>
    <property type="project" value="UniProtKB-SubCell"/>
</dbReference>
<dbReference type="GO" id="GO:0004815">
    <property type="term" value="F:aspartate-tRNA ligase activity"/>
    <property type="evidence" value="ECO:0007669"/>
    <property type="project" value="UniProtKB-UniRule"/>
</dbReference>
<dbReference type="GO" id="GO:0005524">
    <property type="term" value="F:ATP binding"/>
    <property type="evidence" value="ECO:0007669"/>
    <property type="project" value="UniProtKB-UniRule"/>
</dbReference>
<dbReference type="GO" id="GO:0140096">
    <property type="term" value="F:catalytic activity, acting on a protein"/>
    <property type="evidence" value="ECO:0007669"/>
    <property type="project" value="UniProtKB-ARBA"/>
</dbReference>
<dbReference type="GO" id="GO:0003676">
    <property type="term" value="F:nucleic acid binding"/>
    <property type="evidence" value="ECO:0007669"/>
    <property type="project" value="InterPro"/>
</dbReference>
<dbReference type="GO" id="GO:0016740">
    <property type="term" value="F:transferase activity"/>
    <property type="evidence" value="ECO:0007669"/>
    <property type="project" value="UniProtKB-ARBA"/>
</dbReference>
<dbReference type="GO" id="GO:0006422">
    <property type="term" value="P:aspartyl-tRNA aminoacylation"/>
    <property type="evidence" value="ECO:0007669"/>
    <property type="project" value="UniProtKB-UniRule"/>
</dbReference>
<dbReference type="CDD" id="cd00777">
    <property type="entry name" value="AspRS_core"/>
    <property type="match status" value="1"/>
</dbReference>
<dbReference type="CDD" id="cd04317">
    <property type="entry name" value="EcAspRS_like_N"/>
    <property type="match status" value="1"/>
</dbReference>
<dbReference type="Gene3D" id="3.30.930.10">
    <property type="entry name" value="Bira Bifunctional Protein, Domain 2"/>
    <property type="match status" value="1"/>
</dbReference>
<dbReference type="Gene3D" id="3.30.1360.30">
    <property type="entry name" value="GAD-like domain"/>
    <property type="match status" value="1"/>
</dbReference>
<dbReference type="Gene3D" id="2.40.50.140">
    <property type="entry name" value="Nucleic acid-binding proteins"/>
    <property type="match status" value="1"/>
</dbReference>
<dbReference type="HAMAP" id="MF_00044">
    <property type="entry name" value="Asp_tRNA_synth_type1"/>
    <property type="match status" value="1"/>
</dbReference>
<dbReference type="InterPro" id="IPR004364">
    <property type="entry name" value="Aa-tRNA-synt_II"/>
</dbReference>
<dbReference type="InterPro" id="IPR006195">
    <property type="entry name" value="aa-tRNA-synth_II"/>
</dbReference>
<dbReference type="InterPro" id="IPR045864">
    <property type="entry name" value="aa-tRNA-synth_II/BPL/LPL"/>
</dbReference>
<dbReference type="InterPro" id="IPR004524">
    <property type="entry name" value="Asp-tRNA-ligase_1"/>
</dbReference>
<dbReference type="InterPro" id="IPR047089">
    <property type="entry name" value="Asp-tRNA-ligase_1_N"/>
</dbReference>
<dbReference type="InterPro" id="IPR002312">
    <property type="entry name" value="Asp/Asn-tRNA-synth_IIb"/>
</dbReference>
<dbReference type="InterPro" id="IPR047090">
    <property type="entry name" value="AspRS_core"/>
</dbReference>
<dbReference type="InterPro" id="IPR004115">
    <property type="entry name" value="GAD-like_sf"/>
</dbReference>
<dbReference type="InterPro" id="IPR029351">
    <property type="entry name" value="GAD_dom"/>
</dbReference>
<dbReference type="InterPro" id="IPR012340">
    <property type="entry name" value="NA-bd_OB-fold"/>
</dbReference>
<dbReference type="InterPro" id="IPR004365">
    <property type="entry name" value="NA-bd_OB_tRNA"/>
</dbReference>
<dbReference type="NCBIfam" id="TIGR00459">
    <property type="entry name" value="aspS_bact"/>
    <property type="match status" value="1"/>
</dbReference>
<dbReference type="NCBIfam" id="NF001750">
    <property type="entry name" value="PRK00476.1"/>
    <property type="match status" value="1"/>
</dbReference>
<dbReference type="PANTHER" id="PTHR22594:SF5">
    <property type="entry name" value="ASPARTATE--TRNA LIGASE, MITOCHONDRIAL"/>
    <property type="match status" value="1"/>
</dbReference>
<dbReference type="PANTHER" id="PTHR22594">
    <property type="entry name" value="ASPARTYL/LYSYL-TRNA SYNTHETASE"/>
    <property type="match status" value="1"/>
</dbReference>
<dbReference type="Pfam" id="PF02938">
    <property type="entry name" value="GAD"/>
    <property type="match status" value="1"/>
</dbReference>
<dbReference type="Pfam" id="PF00152">
    <property type="entry name" value="tRNA-synt_2"/>
    <property type="match status" value="1"/>
</dbReference>
<dbReference type="Pfam" id="PF01336">
    <property type="entry name" value="tRNA_anti-codon"/>
    <property type="match status" value="1"/>
</dbReference>
<dbReference type="PRINTS" id="PR01042">
    <property type="entry name" value="TRNASYNTHASP"/>
</dbReference>
<dbReference type="SUPFAM" id="SSF55681">
    <property type="entry name" value="Class II aaRS and biotin synthetases"/>
    <property type="match status" value="1"/>
</dbReference>
<dbReference type="SUPFAM" id="SSF55261">
    <property type="entry name" value="GAD domain-like"/>
    <property type="match status" value="1"/>
</dbReference>
<dbReference type="SUPFAM" id="SSF50249">
    <property type="entry name" value="Nucleic acid-binding proteins"/>
    <property type="match status" value="1"/>
</dbReference>
<dbReference type="PROSITE" id="PS50862">
    <property type="entry name" value="AA_TRNA_LIGASE_II"/>
    <property type="match status" value="1"/>
</dbReference>
<accession>Q8XJ28</accession>
<sequence>MGEALNGLKRNIMCGDARESHIGQKVTVMGWVQRNRNLGGLQFIDLRDREGILQVVFNDDLGEEILEKAKSIRPEYCIAVTGEIVKRESVNPNMPTGMVELKAEELKILSESDTPPIYIKEDLDAAESIRLKYRYLDLRRPDMQNIFKIRHKTTKAIRDYLDQNGFLEMETPILTKSTPEGARDYLVPSRNYPGMFYALPQSPQLFKQLLMVSGFDRYFQIVKCFRDEDLRANRQPEFTQVDLEMSFVEQDDVMALNEGLIKHVFKEVLGVDVKTPIKRMTFKDAMEKYGSDKPDLRFGMEITNLSDVVKECGFKVFTDAVANGGSVRGLCLEGGASMGRKDIDRLGEFVKTFKAKGLAWIQLKEEGVKSPIAKFFSEEELNKIIETMGAKTGDLILIVADKNSVVLKALGELRLELSRKFDLVKDKSEFNFTWITEFDLLEYDEEEGRYFAAHHPFTMPMDEDIKYLDTDPGRVRAKAYDLVLNGEELGGGSIRIHDTKLQEKMFEVLGFTQESAWERFGFLLEAFKFGPPPHGGLAFGLDRMIMFLAGTENIKDVITFPKNQNAFCYLTEAPNIVDEEQLKELGIETIKKEDTAE</sequence>
<name>SYD_CLOPE</name>
<proteinExistence type="inferred from homology"/>
<feature type="chain" id="PRO_0000110859" description="Aspartate--tRNA ligase">
    <location>
        <begin position="1"/>
        <end position="597"/>
    </location>
</feature>
<feature type="region of interest" description="Aspartate" evidence="1">
    <location>
        <begin position="204"/>
        <end position="207"/>
    </location>
</feature>
<feature type="binding site" evidence="1">
    <location>
        <position position="180"/>
    </location>
    <ligand>
        <name>L-aspartate</name>
        <dbReference type="ChEBI" id="CHEBI:29991"/>
    </ligand>
</feature>
<feature type="binding site" evidence="1">
    <location>
        <begin position="226"/>
        <end position="228"/>
    </location>
    <ligand>
        <name>ATP</name>
        <dbReference type="ChEBI" id="CHEBI:30616"/>
    </ligand>
</feature>
<feature type="binding site" evidence="1">
    <location>
        <position position="226"/>
    </location>
    <ligand>
        <name>L-aspartate</name>
        <dbReference type="ChEBI" id="CHEBI:29991"/>
    </ligand>
</feature>
<feature type="binding site" evidence="1">
    <location>
        <position position="235"/>
    </location>
    <ligand>
        <name>ATP</name>
        <dbReference type="ChEBI" id="CHEBI:30616"/>
    </ligand>
</feature>
<feature type="binding site" evidence="1">
    <location>
        <position position="454"/>
    </location>
    <ligand>
        <name>L-aspartate</name>
        <dbReference type="ChEBI" id="CHEBI:29991"/>
    </ligand>
</feature>
<feature type="binding site" evidence="1">
    <location>
        <position position="488"/>
    </location>
    <ligand>
        <name>ATP</name>
        <dbReference type="ChEBI" id="CHEBI:30616"/>
    </ligand>
</feature>
<feature type="binding site" evidence="1">
    <location>
        <position position="495"/>
    </location>
    <ligand>
        <name>L-aspartate</name>
        <dbReference type="ChEBI" id="CHEBI:29991"/>
    </ligand>
</feature>
<feature type="binding site" evidence="1">
    <location>
        <begin position="540"/>
        <end position="543"/>
    </location>
    <ligand>
        <name>ATP</name>
        <dbReference type="ChEBI" id="CHEBI:30616"/>
    </ligand>
</feature>
<comment type="function">
    <text evidence="1">Catalyzes the attachment of L-aspartate to tRNA(Asp) in a two-step reaction: L-aspartate is first activated by ATP to form Asp-AMP and then transferred to the acceptor end of tRNA(Asp).</text>
</comment>
<comment type="catalytic activity">
    <reaction evidence="1">
        <text>tRNA(Asp) + L-aspartate + ATP = L-aspartyl-tRNA(Asp) + AMP + diphosphate</text>
        <dbReference type="Rhea" id="RHEA:19649"/>
        <dbReference type="Rhea" id="RHEA-COMP:9660"/>
        <dbReference type="Rhea" id="RHEA-COMP:9678"/>
        <dbReference type="ChEBI" id="CHEBI:29991"/>
        <dbReference type="ChEBI" id="CHEBI:30616"/>
        <dbReference type="ChEBI" id="CHEBI:33019"/>
        <dbReference type="ChEBI" id="CHEBI:78442"/>
        <dbReference type="ChEBI" id="CHEBI:78516"/>
        <dbReference type="ChEBI" id="CHEBI:456215"/>
        <dbReference type="EC" id="6.1.1.12"/>
    </reaction>
</comment>
<comment type="subunit">
    <text evidence="1">Homodimer.</text>
</comment>
<comment type="subcellular location">
    <subcellularLocation>
        <location evidence="1">Cytoplasm</location>
    </subcellularLocation>
</comment>
<comment type="similarity">
    <text evidence="1">Belongs to the class-II aminoacyl-tRNA synthetase family. Type 1 subfamily.</text>
</comment>
<organism>
    <name type="scientific">Clostridium perfringens (strain 13 / Type A)</name>
    <dbReference type="NCBI Taxonomy" id="195102"/>
    <lineage>
        <taxon>Bacteria</taxon>
        <taxon>Bacillati</taxon>
        <taxon>Bacillota</taxon>
        <taxon>Clostridia</taxon>
        <taxon>Eubacteriales</taxon>
        <taxon>Clostridiaceae</taxon>
        <taxon>Clostridium</taxon>
    </lineage>
</organism>
<gene>
    <name evidence="1" type="primary">aspS</name>
    <name type="ordered locus">CPE1933</name>
</gene>
<keyword id="KW-0030">Aminoacyl-tRNA synthetase</keyword>
<keyword id="KW-0067">ATP-binding</keyword>
<keyword id="KW-0963">Cytoplasm</keyword>
<keyword id="KW-0436">Ligase</keyword>
<keyword id="KW-0547">Nucleotide-binding</keyword>
<keyword id="KW-0648">Protein biosynthesis</keyword>
<keyword id="KW-1185">Reference proteome</keyword>
<reference key="1">
    <citation type="journal article" date="2002" name="Proc. Natl. Acad. Sci. U.S.A.">
        <title>Complete genome sequence of Clostridium perfringens, an anaerobic flesh-eater.</title>
        <authorList>
            <person name="Shimizu T."/>
            <person name="Ohtani K."/>
            <person name="Hirakawa H."/>
            <person name="Ohshima K."/>
            <person name="Yamashita A."/>
            <person name="Shiba T."/>
            <person name="Ogasawara N."/>
            <person name="Hattori M."/>
            <person name="Kuhara S."/>
            <person name="Hayashi H."/>
        </authorList>
    </citation>
    <scope>NUCLEOTIDE SEQUENCE [LARGE SCALE GENOMIC DNA]</scope>
    <source>
        <strain>13 / Type A</strain>
    </source>
</reference>
<evidence type="ECO:0000255" key="1">
    <source>
        <dbReference type="HAMAP-Rule" id="MF_00044"/>
    </source>
</evidence>